<feature type="chain" id="PRO_0000169682" description="Uncharacterized protein YiiE">
    <location>
        <begin position="1"/>
        <end position="72"/>
    </location>
</feature>
<feature type="region of interest" description="Disordered" evidence="1">
    <location>
        <begin position="51"/>
        <end position="72"/>
    </location>
</feature>
<comment type="similarity">
    <text evidence="2">Belongs to the YiiE family.</text>
</comment>
<comment type="sequence caution" evidence="2">
    <conflict type="erroneous initiation">
        <sequence resource="EMBL-CDS" id="AAB03022"/>
    </conflict>
    <text>Extended N-terminus.</text>
</comment>
<organism>
    <name type="scientific">Escherichia coli (strain K12)</name>
    <dbReference type="NCBI Taxonomy" id="83333"/>
    <lineage>
        <taxon>Bacteria</taxon>
        <taxon>Pseudomonadati</taxon>
        <taxon>Pseudomonadota</taxon>
        <taxon>Gammaproteobacteria</taxon>
        <taxon>Enterobacterales</taxon>
        <taxon>Enterobacteriaceae</taxon>
        <taxon>Escherichia</taxon>
    </lineage>
</organism>
<protein>
    <recommendedName>
        <fullName>Uncharacterized protein YiiE</fullName>
    </recommendedName>
</protein>
<dbReference type="EMBL" id="L19201">
    <property type="protein sequence ID" value="AAB03022.1"/>
    <property type="status" value="ALT_INIT"/>
    <property type="molecule type" value="Genomic_DNA"/>
</dbReference>
<dbReference type="EMBL" id="U00096">
    <property type="protein sequence ID" value="AAD13451.4"/>
    <property type="molecule type" value="Genomic_DNA"/>
</dbReference>
<dbReference type="EMBL" id="AP009048">
    <property type="protein sequence ID" value="BAE77420.1"/>
    <property type="molecule type" value="Genomic_DNA"/>
</dbReference>
<dbReference type="PIR" id="S40833">
    <property type="entry name" value="S40833"/>
</dbReference>
<dbReference type="RefSeq" id="NP_418325.3">
    <property type="nucleotide sequence ID" value="NC_000913.3"/>
</dbReference>
<dbReference type="RefSeq" id="WP_001295676.1">
    <property type="nucleotide sequence ID" value="NZ_STEB01000017.1"/>
</dbReference>
<dbReference type="SMR" id="P0ADQ5"/>
<dbReference type="BioGRID" id="4261100">
    <property type="interactions" value="7"/>
</dbReference>
<dbReference type="FunCoup" id="P0ADQ5">
    <property type="interactions" value="7"/>
</dbReference>
<dbReference type="STRING" id="511145.b3889"/>
<dbReference type="PaxDb" id="511145-b3889"/>
<dbReference type="EnsemblBacteria" id="AAD13451">
    <property type="protein sequence ID" value="AAD13451"/>
    <property type="gene ID" value="b3889"/>
</dbReference>
<dbReference type="GeneID" id="948386"/>
<dbReference type="KEGG" id="ecj:JW5929"/>
<dbReference type="KEGG" id="eco:b3889"/>
<dbReference type="KEGG" id="ecoc:C3026_21020"/>
<dbReference type="PATRIC" id="fig|1411691.4.peg.2821"/>
<dbReference type="EchoBASE" id="EB1800"/>
<dbReference type="eggNOG" id="COG3905">
    <property type="taxonomic scope" value="Bacteria"/>
</dbReference>
<dbReference type="HOGENOM" id="CLU_182089_1_0_6"/>
<dbReference type="InParanoid" id="P0ADQ5"/>
<dbReference type="OMA" id="MNSICKV"/>
<dbReference type="OrthoDB" id="6581014at2"/>
<dbReference type="BioCyc" id="EcoCyc:EG11854-MONOMER"/>
<dbReference type="PRO" id="PR:P0ADQ5"/>
<dbReference type="Proteomes" id="UP000000625">
    <property type="component" value="Chromosome"/>
</dbReference>
<dbReference type="GO" id="GO:0043565">
    <property type="term" value="F:sequence-specific DNA binding"/>
    <property type="evidence" value="ECO:0007669"/>
    <property type="project" value="UniProtKB-ARBA"/>
</dbReference>
<dbReference type="GO" id="GO:0006355">
    <property type="term" value="P:regulation of DNA-templated transcription"/>
    <property type="evidence" value="ECO:0007669"/>
    <property type="project" value="InterPro"/>
</dbReference>
<dbReference type="CDD" id="cd21631">
    <property type="entry name" value="RHH_CopG_NikR-like"/>
    <property type="match status" value="1"/>
</dbReference>
<dbReference type="Gene3D" id="1.10.1220.10">
    <property type="entry name" value="Met repressor-like"/>
    <property type="match status" value="1"/>
</dbReference>
<dbReference type="InterPro" id="IPR013321">
    <property type="entry name" value="Arc_rbn_hlx_hlx"/>
</dbReference>
<dbReference type="InterPro" id="IPR002145">
    <property type="entry name" value="CopG"/>
</dbReference>
<dbReference type="Pfam" id="PF01402">
    <property type="entry name" value="RHH_1"/>
    <property type="match status" value="1"/>
</dbReference>
<evidence type="ECO:0000256" key="1">
    <source>
        <dbReference type="SAM" id="MobiDB-lite"/>
    </source>
</evidence>
<evidence type="ECO:0000305" key="2"/>
<name>YIIE_ECOLI</name>
<reference key="1">
    <citation type="journal article" date="1993" name="Nucleic Acids Res.">
        <title>Analysis of the Escherichia coli genome. III. DNA sequence of the region from 87.2 to 89.2 minutes.</title>
        <authorList>
            <person name="Plunkett G. III"/>
            <person name="Burland V."/>
            <person name="Daniels D.L."/>
            <person name="Blattner F.R."/>
        </authorList>
    </citation>
    <scope>NUCLEOTIDE SEQUENCE [LARGE SCALE GENOMIC DNA]</scope>
    <source>
        <strain>K12 / MG1655 / ATCC 47076</strain>
    </source>
</reference>
<reference key="2">
    <citation type="journal article" date="1997" name="Science">
        <title>The complete genome sequence of Escherichia coli K-12.</title>
        <authorList>
            <person name="Blattner F.R."/>
            <person name="Plunkett G. III"/>
            <person name="Bloch C.A."/>
            <person name="Perna N.T."/>
            <person name="Burland V."/>
            <person name="Riley M."/>
            <person name="Collado-Vides J."/>
            <person name="Glasner J.D."/>
            <person name="Rode C.K."/>
            <person name="Mayhew G.F."/>
            <person name="Gregor J."/>
            <person name="Davis N.W."/>
            <person name="Kirkpatrick H.A."/>
            <person name="Goeden M.A."/>
            <person name="Rose D.J."/>
            <person name="Mau B."/>
            <person name="Shao Y."/>
        </authorList>
    </citation>
    <scope>NUCLEOTIDE SEQUENCE [LARGE SCALE GENOMIC DNA]</scope>
    <source>
        <strain>K12 / MG1655 / ATCC 47076</strain>
    </source>
</reference>
<reference key="3">
    <citation type="journal article" date="2006" name="Mol. Syst. Biol.">
        <title>Highly accurate genome sequences of Escherichia coli K-12 strains MG1655 and W3110.</title>
        <authorList>
            <person name="Hayashi K."/>
            <person name="Morooka N."/>
            <person name="Yamamoto Y."/>
            <person name="Fujita K."/>
            <person name="Isono K."/>
            <person name="Choi S."/>
            <person name="Ohtsubo E."/>
            <person name="Baba T."/>
            <person name="Wanner B.L."/>
            <person name="Mori H."/>
            <person name="Horiuchi T."/>
        </authorList>
    </citation>
    <scope>NUCLEOTIDE SEQUENCE [LARGE SCALE GENOMIC DNA]</scope>
    <source>
        <strain>K12 / W3110 / ATCC 27325 / DSM 5911</strain>
    </source>
</reference>
<gene>
    <name type="primary">yiiE</name>
    <name type="ordered locus">b3889</name>
    <name type="ordered locus">JW5929</name>
</gene>
<proteinExistence type="inferred from homology"/>
<sequence length="72" mass="8408">MAMNTVFLHLSEEAIKRLNKLRGWRKVSRSAILREAVEQYLERQQFPVRKAKGGRQKGEVVGVDDQCKEHKE</sequence>
<keyword id="KW-1185">Reference proteome</keyword>
<accession>P0ADQ5</accession>
<accession>P32149</accession>
<accession>Q2M8I6</accession>